<protein>
    <recommendedName>
        <fullName evidence="1">DNA-directed RNA polymerase subunit beta</fullName>
        <shortName evidence="1">RNAP subunit beta</shortName>
        <ecNumber evidence="1">2.7.7.6</ecNumber>
    </recommendedName>
    <alternativeName>
        <fullName evidence="1">RNA polymerase subunit beta</fullName>
    </alternativeName>
    <alternativeName>
        <fullName evidence="1">Transcriptase subunit beta</fullName>
    </alternativeName>
</protein>
<comment type="function">
    <text evidence="1">DNA-dependent RNA polymerase catalyzes the transcription of DNA into RNA using the four ribonucleoside triphosphates as substrates.</text>
</comment>
<comment type="catalytic activity">
    <reaction evidence="1">
        <text>RNA(n) + a ribonucleoside 5'-triphosphate = RNA(n+1) + diphosphate</text>
        <dbReference type="Rhea" id="RHEA:21248"/>
        <dbReference type="Rhea" id="RHEA-COMP:14527"/>
        <dbReference type="Rhea" id="RHEA-COMP:17342"/>
        <dbReference type="ChEBI" id="CHEBI:33019"/>
        <dbReference type="ChEBI" id="CHEBI:61557"/>
        <dbReference type="ChEBI" id="CHEBI:140395"/>
        <dbReference type="EC" id="2.7.7.6"/>
    </reaction>
</comment>
<comment type="subunit">
    <text evidence="1">The RNAP catalytic core consists of 2 alpha, 1 beta, 1 beta' and 1 omega subunit. When a sigma factor is associated with the core the holoenzyme is formed, which can initiate transcription.</text>
</comment>
<comment type="similarity">
    <text evidence="1">Belongs to the RNA polymerase beta chain family.</text>
</comment>
<reference key="1">
    <citation type="journal article" date="2006" name="Nat. Biotechnol.">
        <title>Genome sequence of the ubiquitous hydrocarbon-degrading marine bacterium Alcanivorax borkumensis.</title>
        <authorList>
            <person name="Schneiker S."/>
            <person name="Martins dos Santos V.A.P."/>
            <person name="Bartels D."/>
            <person name="Bekel T."/>
            <person name="Brecht M."/>
            <person name="Buhrmester J."/>
            <person name="Chernikova T.N."/>
            <person name="Denaro R."/>
            <person name="Ferrer M."/>
            <person name="Gertler C."/>
            <person name="Goesmann A."/>
            <person name="Golyshina O.V."/>
            <person name="Kaminski F."/>
            <person name="Khachane A.N."/>
            <person name="Lang S."/>
            <person name="Linke B."/>
            <person name="McHardy A.C."/>
            <person name="Meyer F."/>
            <person name="Nechitaylo T."/>
            <person name="Puehler A."/>
            <person name="Regenhardt D."/>
            <person name="Rupp O."/>
            <person name="Sabirova J.S."/>
            <person name="Selbitschka W."/>
            <person name="Yakimov M.M."/>
            <person name="Timmis K.N."/>
            <person name="Vorhoelter F.-J."/>
            <person name="Weidner S."/>
            <person name="Kaiser O."/>
            <person name="Golyshin P.N."/>
        </authorList>
    </citation>
    <scope>NUCLEOTIDE SEQUENCE [LARGE SCALE GENOMIC DNA]</scope>
    <source>
        <strain>ATCC 700651 / DSM 11573 / NCIMB 13689 / SK2</strain>
    </source>
</reference>
<organism>
    <name type="scientific">Alcanivorax borkumensis (strain ATCC 700651 / DSM 11573 / NCIMB 13689 / SK2)</name>
    <dbReference type="NCBI Taxonomy" id="393595"/>
    <lineage>
        <taxon>Bacteria</taxon>
        <taxon>Pseudomonadati</taxon>
        <taxon>Pseudomonadota</taxon>
        <taxon>Gammaproteobacteria</taxon>
        <taxon>Oceanospirillales</taxon>
        <taxon>Alcanivoracaceae</taxon>
        <taxon>Alcanivorax</taxon>
    </lineage>
</organism>
<sequence length="1380" mass="154611">MAYSFTEKKRIRKDFGKLPKVMEVPYLLAIQLDSYRKFLQQDKSAEERLEEGLEAAFRSVFPIASYSGNAALEYAGYEFGKPVFDVKECIIRGTTYAAPLRVRIRLVIYDRESSGAIKDIREQQVYMGEIPLMTENGTFVINGTERVIVSQLHRSPGVFFDHDKGKTHSSGKLLYSARVIPYRGSWLDFEFDPKDQVFVRIDRRRKLPATILLRALGYTSDEVLEMFFDTNEIAVEDGIYRMKLVPERLRGETATFDILADGEVVVERGRRITARHIRQLEKANIEYLDIPAEYLQGKYLAKSIIDQDTGEILVECNTELTAETLEKLEQGGITDFETLYTNDLDNGPFMADTLRADPTRTPLEALVEIYRMMRPGEPPTKEAAENLFKNLFFTDERYDLSTVGRMKFNRRLGREDETGPGILYDGRYFSARSDEEGKQYFEQMGGETSDIIDVLRTLVDIRNGNGVVDDIDHLGNRRVRSVGEMAENQFRVGLVRVERAVKERLSLAESEGLMPQDLINSKPVAAAVKEFFGSSQLSQFMDQNNPLSEITHKRRVSALGPGGLTRERAGFEVRDVHPTHYGRVCPIETPEGPNIGLINSLATYARANEYGFLESPYLKVIDGKVSEEIEYLSAIEEAECVIAQVDAKMTEEGGFEEDFVTVRHRYEFTVMERDTITHMDVSPRQVVSVAASLIPFLEHDDANRALMGSNMQRQAVPTLRADKPLVGTGFERHVARDSGVCVVATRGGIVDKVDASRIIVKVNDDEVSEGEAGVDIYNLTKYTRSNQNTCINQRPLVKVGDRVAARDIMADGPSVDMGELALGQNMRVAFMPWNGYNFEDSILISEKVVKDDRFTSIHIQELTCIARDTKLGPEEITADIPNVGEAALSKLDESGIVYIGAEVEAGDILVGKVTPKGETQLTPEEKLLRAIFGEKASDVKDTSQRVSSGVKGTIIDVQVFTRDGVEKDERARQIEQAALEQFRKDLKDEYRILELDILERLRAVMVGKKVNGGAGFKRGTEMTGEILDGLDAEKWFELRPADDDVAEQLERAQQYLEQHKKEQDERYKDKQAKISGGDDLAHGVLKVVKVYLAIKRRIQPGDKMAGRHGNKGVISVIMPEEDMPHDENGVPVDVVLNPLGVPSRMNVGQILETHLGWAAKGLGERIGEMLAEQKKIADIRVFLDKIYNQAGAGGTPEDLDSFSDDEIIELAKNLVGGVPMATAVFDGAKEFEIKELLELAGHDRSGQVQLWDGRTGEAFDRKVTVGYMYMLKLNHLVDDKMHARSTGSYSLVTQQPLGGKAQFGGQRFGEMEVWALEAYGAAYTLQEMLTVKSDDVNGRTRVYKNIVDGDHRMDPGMPESFNVLLKEIRSLGINIELEND</sequence>
<accession>Q0VSM2</accession>
<dbReference type="EC" id="2.7.7.6" evidence="1"/>
<dbReference type="EMBL" id="AM286690">
    <property type="protein sequence ID" value="CAL15826.1"/>
    <property type="molecule type" value="Genomic_DNA"/>
</dbReference>
<dbReference type="RefSeq" id="WP_011587673.1">
    <property type="nucleotide sequence ID" value="NC_008260.1"/>
</dbReference>
<dbReference type="SMR" id="Q0VSM2"/>
<dbReference type="STRING" id="393595.ABO_0378"/>
<dbReference type="KEGG" id="abo:ABO_0378"/>
<dbReference type="eggNOG" id="COG0085">
    <property type="taxonomic scope" value="Bacteria"/>
</dbReference>
<dbReference type="HOGENOM" id="CLU_000524_4_0_6"/>
<dbReference type="OrthoDB" id="9803954at2"/>
<dbReference type="Proteomes" id="UP000008871">
    <property type="component" value="Chromosome"/>
</dbReference>
<dbReference type="GO" id="GO:0000428">
    <property type="term" value="C:DNA-directed RNA polymerase complex"/>
    <property type="evidence" value="ECO:0007669"/>
    <property type="project" value="UniProtKB-KW"/>
</dbReference>
<dbReference type="GO" id="GO:0003677">
    <property type="term" value="F:DNA binding"/>
    <property type="evidence" value="ECO:0007669"/>
    <property type="project" value="UniProtKB-UniRule"/>
</dbReference>
<dbReference type="GO" id="GO:0003899">
    <property type="term" value="F:DNA-directed RNA polymerase activity"/>
    <property type="evidence" value="ECO:0007669"/>
    <property type="project" value="UniProtKB-UniRule"/>
</dbReference>
<dbReference type="GO" id="GO:0032549">
    <property type="term" value="F:ribonucleoside binding"/>
    <property type="evidence" value="ECO:0007669"/>
    <property type="project" value="InterPro"/>
</dbReference>
<dbReference type="GO" id="GO:0006351">
    <property type="term" value="P:DNA-templated transcription"/>
    <property type="evidence" value="ECO:0007669"/>
    <property type="project" value="UniProtKB-UniRule"/>
</dbReference>
<dbReference type="CDD" id="cd00653">
    <property type="entry name" value="RNA_pol_B_RPB2"/>
    <property type="match status" value="1"/>
</dbReference>
<dbReference type="FunFam" id="2.40.50.100:FF:000006">
    <property type="entry name" value="DNA-directed RNA polymerase subunit beta"/>
    <property type="match status" value="1"/>
</dbReference>
<dbReference type="FunFam" id="2.40.50.150:FF:000001">
    <property type="entry name" value="DNA-directed RNA polymerase subunit beta"/>
    <property type="match status" value="1"/>
</dbReference>
<dbReference type="FunFam" id="3.90.1110.10:FF:000001">
    <property type="entry name" value="DNA-directed RNA polymerase subunit beta"/>
    <property type="match status" value="1"/>
</dbReference>
<dbReference type="FunFam" id="3.90.1800.10:FF:000001">
    <property type="entry name" value="DNA-directed RNA polymerase subunit beta"/>
    <property type="match status" value="1"/>
</dbReference>
<dbReference type="Gene3D" id="2.40.50.100">
    <property type="match status" value="1"/>
</dbReference>
<dbReference type="Gene3D" id="2.40.50.150">
    <property type="match status" value="1"/>
</dbReference>
<dbReference type="Gene3D" id="3.90.1100.10">
    <property type="match status" value="2"/>
</dbReference>
<dbReference type="Gene3D" id="2.30.150.10">
    <property type="entry name" value="DNA-directed RNA polymerase, beta subunit, external 1 domain"/>
    <property type="match status" value="1"/>
</dbReference>
<dbReference type="Gene3D" id="2.40.270.10">
    <property type="entry name" value="DNA-directed RNA polymerase, subunit 2, domain 6"/>
    <property type="match status" value="1"/>
</dbReference>
<dbReference type="Gene3D" id="3.90.1800.10">
    <property type="entry name" value="RNA polymerase alpha subunit dimerisation domain"/>
    <property type="match status" value="1"/>
</dbReference>
<dbReference type="Gene3D" id="3.90.1110.10">
    <property type="entry name" value="RNA polymerase Rpb2, domain 2"/>
    <property type="match status" value="1"/>
</dbReference>
<dbReference type="HAMAP" id="MF_01321">
    <property type="entry name" value="RNApol_bact_RpoB"/>
    <property type="match status" value="1"/>
</dbReference>
<dbReference type="InterPro" id="IPR042107">
    <property type="entry name" value="DNA-dir_RNA_pol_bsu_ext_1_sf"/>
</dbReference>
<dbReference type="InterPro" id="IPR019462">
    <property type="entry name" value="DNA-dir_RNA_pol_bsu_external_1"/>
</dbReference>
<dbReference type="InterPro" id="IPR015712">
    <property type="entry name" value="DNA-dir_RNA_pol_su2"/>
</dbReference>
<dbReference type="InterPro" id="IPR007120">
    <property type="entry name" value="DNA-dir_RNAP_su2_dom"/>
</dbReference>
<dbReference type="InterPro" id="IPR037033">
    <property type="entry name" value="DNA-dir_RNAP_su2_hyb_sf"/>
</dbReference>
<dbReference type="InterPro" id="IPR010243">
    <property type="entry name" value="RNA_pol_bsu_bac"/>
</dbReference>
<dbReference type="InterPro" id="IPR007121">
    <property type="entry name" value="RNA_pol_bsu_CS"/>
</dbReference>
<dbReference type="InterPro" id="IPR007644">
    <property type="entry name" value="RNA_pol_bsu_protrusion"/>
</dbReference>
<dbReference type="InterPro" id="IPR007642">
    <property type="entry name" value="RNA_pol_Rpb2_2"/>
</dbReference>
<dbReference type="InterPro" id="IPR037034">
    <property type="entry name" value="RNA_pol_Rpb2_2_sf"/>
</dbReference>
<dbReference type="InterPro" id="IPR007645">
    <property type="entry name" value="RNA_pol_Rpb2_3"/>
</dbReference>
<dbReference type="InterPro" id="IPR007641">
    <property type="entry name" value="RNA_pol_Rpb2_7"/>
</dbReference>
<dbReference type="InterPro" id="IPR014724">
    <property type="entry name" value="RNA_pol_RPB2_OB-fold"/>
</dbReference>
<dbReference type="NCBIfam" id="NF001616">
    <property type="entry name" value="PRK00405.1"/>
    <property type="match status" value="1"/>
</dbReference>
<dbReference type="NCBIfam" id="TIGR02013">
    <property type="entry name" value="rpoB"/>
    <property type="match status" value="1"/>
</dbReference>
<dbReference type="PANTHER" id="PTHR20856">
    <property type="entry name" value="DNA-DIRECTED RNA POLYMERASE I SUBUNIT 2"/>
    <property type="match status" value="1"/>
</dbReference>
<dbReference type="Pfam" id="PF04563">
    <property type="entry name" value="RNA_pol_Rpb2_1"/>
    <property type="match status" value="1"/>
</dbReference>
<dbReference type="Pfam" id="PF04561">
    <property type="entry name" value="RNA_pol_Rpb2_2"/>
    <property type="match status" value="2"/>
</dbReference>
<dbReference type="Pfam" id="PF04565">
    <property type="entry name" value="RNA_pol_Rpb2_3"/>
    <property type="match status" value="1"/>
</dbReference>
<dbReference type="Pfam" id="PF10385">
    <property type="entry name" value="RNA_pol_Rpb2_45"/>
    <property type="match status" value="1"/>
</dbReference>
<dbReference type="Pfam" id="PF00562">
    <property type="entry name" value="RNA_pol_Rpb2_6"/>
    <property type="match status" value="1"/>
</dbReference>
<dbReference type="Pfam" id="PF04560">
    <property type="entry name" value="RNA_pol_Rpb2_7"/>
    <property type="match status" value="1"/>
</dbReference>
<dbReference type="SUPFAM" id="SSF64484">
    <property type="entry name" value="beta and beta-prime subunits of DNA dependent RNA-polymerase"/>
    <property type="match status" value="1"/>
</dbReference>
<dbReference type="PROSITE" id="PS01166">
    <property type="entry name" value="RNA_POL_BETA"/>
    <property type="match status" value="1"/>
</dbReference>
<feature type="chain" id="PRO_0000300275" description="DNA-directed RNA polymerase subunit beta">
    <location>
        <begin position="1"/>
        <end position="1380"/>
    </location>
</feature>
<proteinExistence type="inferred from homology"/>
<name>RPOB_ALCBS</name>
<gene>
    <name evidence="1" type="primary">rpoB</name>
    <name type="ordered locus">ABO_0378</name>
</gene>
<evidence type="ECO:0000255" key="1">
    <source>
        <dbReference type="HAMAP-Rule" id="MF_01321"/>
    </source>
</evidence>
<keyword id="KW-0240">DNA-directed RNA polymerase</keyword>
<keyword id="KW-0548">Nucleotidyltransferase</keyword>
<keyword id="KW-1185">Reference proteome</keyword>
<keyword id="KW-0804">Transcription</keyword>
<keyword id="KW-0808">Transferase</keyword>